<proteinExistence type="evidence at protein level"/>
<protein>
    <recommendedName>
        <fullName>Coiled-coil domain-containing glutamate-rich protein 1</fullName>
    </recommendedName>
</protein>
<keyword id="KW-0175">Coiled coil</keyword>
<keyword id="KW-0221">Differentiation</keyword>
<keyword id="KW-0539">Nucleus</keyword>
<keyword id="KW-1267">Proteomics identification</keyword>
<keyword id="KW-1185">Reference proteome</keyword>
<keyword id="KW-0744">Spermatogenesis</keyword>
<sequence>MTQTLDTREDPLNLGGGGGGGCGCGWAHSASLSSWSSCHRRRPGAPAYNRPHRYSPKTEYGPPRKQPKQQHGPGFWFQPPVCSNWGCWGGPWRPPPPGFWKFPCPVQVFRVYGLHPLCFCCCSCWSGSWNPGWVKPPGRKKRWGRRGRGLRHHPRHSYPRSPPADVSTLPRPVKLYEWREPGMRAPPNTTQFIMNQIYEDMRQQEKVERQQEALRAQKATVSGEASPARSSGNDAPPGGSKETWGLQETLYGFVQNPSLAFSPNPEENQSLAPLLVEEEEEKKNDDEEEYDQEVCDAKEASEEEEEVEDEEEEVEDEEEEEVEEAEYVEEGEEELEEEELEEEEEVLEENEQRGEEFHLPLEMPLSIFVEAEEKRENFISCTFLNPEQIIPKVPQESLFMAQDFNC</sequence>
<reference key="1">
    <citation type="journal article" date="2004" name="Genome Res.">
        <title>The status, quality, and expansion of the NIH full-length cDNA project: the Mammalian Gene Collection (MGC).</title>
        <authorList>
            <consortium name="The MGC Project Team"/>
        </authorList>
    </citation>
    <scope>NUCLEOTIDE SEQUENCE [LARGE SCALE MRNA]</scope>
    <scope>VARIANT MET-379</scope>
    <source>
        <tissue>Testis</tissue>
    </source>
</reference>
<reference key="2">
    <citation type="journal article" date="2023" name="Nat. Commun.">
        <title>Phase-separated CCER1 coordinates the histone-to-protamine transition and male fertility.</title>
        <authorList>
            <person name="Qin D."/>
            <person name="Gu Y."/>
            <person name="Zhang Y."/>
            <person name="Wang S."/>
            <person name="Jiang T."/>
            <person name="Wang Y."/>
            <person name="Wang C."/>
            <person name="Chen C."/>
            <person name="Zhang T."/>
            <person name="Xu W."/>
            <person name="Wang H."/>
            <person name="Zhang K."/>
            <person name="Hu L."/>
            <person name="Li L."/>
            <person name="Xie W."/>
            <person name="Wu X."/>
            <person name="Hu Z."/>
        </authorList>
    </citation>
    <scope>SUBCELLULAR LOCATION</scope>
    <scope>VARIANTS 53-ARG--CYS-406 DEL AND 178-TRP--CYS-406 DEL</scope>
</reference>
<evidence type="ECO:0000250" key="1">
    <source>
        <dbReference type="UniProtKB" id="Q9CQL2"/>
    </source>
</evidence>
<evidence type="ECO:0000255" key="2"/>
<evidence type="ECO:0000256" key="3">
    <source>
        <dbReference type="SAM" id="MobiDB-lite"/>
    </source>
</evidence>
<evidence type="ECO:0000269" key="4">
    <source>
    </source>
</evidence>
<evidence type="ECO:0000269" key="5">
    <source>
    </source>
</evidence>
<dbReference type="EMBL" id="BC024183">
    <property type="protein sequence ID" value="AAH24183.1"/>
    <property type="molecule type" value="mRNA"/>
</dbReference>
<dbReference type="EMBL" id="BC026075">
    <property type="protein sequence ID" value="AAH26075.1"/>
    <property type="molecule type" value="mRNA"/>
</dbReference>
<dbReference type="EMBL" id="BC027600">
    <property type="protein sequence ID" value="AAH27600.1"/>
    <property type="molecule type" value="mRNA"/>
</dbReference>
<dbReference type="EMBL" id="BC034491">
    <property type="protein sequence ID" value="AAH34491.1"/>
    <property type="molecule type" value="mRNA"/>
</dbReference>
<dbReference type="CCDS" id="CCDS9036.1"/>
<dbReference type="RefSeq" id="NP_689851.1">
    <property type="nucleotide sequence ID" value="NM_152638.4"/>
</dbReference>
<dbReference type="SMR" id="Q8TC90"/>
<dbReference type="BioGRID" id="128212">
    <property type="interactions" value="15"/>
</dbReference>
<dbReference type="FunCoup" id="Q8TC90">
    <property type="interactions" value="6"/>
</dbReference>
<dbReference type="IntAct" id="Q8TC90">
    <property type="interactions" value="13"/>
</dbReference>
<dbReference type="STRING" id="9606.ENSP00000351727"/>
<dbReference type="iPTMnet" id="Q8TC90"/>
<dbReference type="PhosphoSitePlus" id="Q8TC90"/>
<dbReference type="BioMuta" id="CCER1"/>
<dbReference type="DMDM" id="74730573"/>
<dbReference type="jPOST" id="Q8TC90"/>
<dbReference type="MassIVE" id="Q8TC90"/>
<dbReference type="PaxDb" id="9606-ENSP00000351727"/>
<dbReference type="PeptideAtlas" id="Q8TC90"/>
<dbReference type="ProteomicsDB" id="74101"/>
<dbReference type="Antibodypedia" id="66707">
    <property type="antibodies" value="3 antibodies from 3 providers"/>
</dbReference>
<dbReference type="DNASU" id="196477"/>
<dbReference type="Ensembl" id="ENST00000358859.3">
    <property type="protein sequence ID" value="ENSP00000351727.2"/>
    <property type="gene ID" value="ENSG00000197651.4"/>
</dbReference>
<dbReference type="GeneID" id="196477"/>
<dbReference type="KEGG" id="hsa:196477"/>
<dbReference type="MANE-Select" id="ENST00000358859.3">
    <property type="protein sequence ID" value="ENSP00000351727.2"/>
    <property type="RefSeq nucleotide sequence ID" value="NM_152638.4"/>
    <property type="RefSeq protein sequence ID" value="NP_689851.1"/>
</dbReference>
<dbReference type="UCSC" id="uc001tbj.3">
    <property type="organism name" value="human"/>
</dbReference>
<dbReference type="AGR" id="HGNC:28373"/>
<dbReference type="CTD" id="196477"/>
<dbReference type="DisGeNET" id="196477"/>
<dbReference type="GeneCards" id="CCER1"/>
<dbReference type="HGNC" id="HGNC:28373">
    <property type="gene designation" value="CCER1"/>
</dbReference>
<dbReference type="HPA" id="ENSG00000197651">
    <property type="expression patterns" value="Tissue enriched (testis)"/>
</dbReference>
<dbReference type="MalaCards" id="CCER1"/>
<dbReference type="MIM" id="620881">
    <property type="type" value="gene"/>
</dbReference>
<dbReference type="neXtProt" id="NX_Q8TC90"/>
<dbReference type="OpenTargets" id="ENSG00000197651"/>
<dbReference type="PharmGKB" id="PA142672294"/>
<dbReference type="VEuPathDB" id="HostDB:ENSG00000197651"/>
<dbReference type="eggNOG" id="ENOG502S11C">
    <property type="taxonomic scope" value="Eukaryota"/>
</dbReference>
<dbReference type="GeneTree" id="ENSGT00730000111529"/>
<dbReference type="HOGENOM" id="CLU_794441_0_0_1"/>
<dbReference type="InParanoid" id="Q8TC90"/>
<dbReference type="OMA" id="PLCFCCC"/>
<dbReference type="OrthoDB" id="9451863at2759"/>
<dbReference type="PAN-GO" id="Q8TC90">
    <property type="GO annotations" value="0 GO annotations based on evolutionary models"/>
</dbReference>
<dbReference type="PhylomeDB" id="Q8TC90"/>
<dbReference type="PathwayCommons" id="Q8TC90"/>
<dbReference type="SignaLink" id="Q8TC90"/>
<dbReference type="BioGRID-ORCS" id="196477">
    <property type="hits" value="18 hits in 1136 CRISPR screens"/>
</dbReference>
<dbReference type="ChiTaRS" id="CCER1">
    <property type="organism name" value="human"/>
</dbReference>
<dbReference type="GenomeRNAi" id="196477"/>
<dbReference type="Pharos" id="Q8TC90">
    <property type="development level" value="Tdark"/>
</dbReference>
<dbReference type="PRO" id="PR:Q8TC90"/>
<dbReference type="Proteomes" id="UP000005640">
    <property type="component" value="Chromosome 12"/>
</dbReference>
<dbReference type="RNAct" id="Q8TC90">
    <property type="molecule type" value="protein"/>
</dbReference>
<dbReference type="Bgee" id="ENSG00000197651">
    <property type="expression patterns" value="Expressed in sperm and 32 other cell types or tissues"/>
</dbReference>
<dbReference type="ExpressionAtlas" id="Q8TC90">
    <property type="expression patterns" value="baseline and differential"/>
</dbReference>
<dbReference type="GO" id="GO:0005634">
    <property type="term" value="C:nucleus"/>
    <property type="evidence" value="ECO:0000250"/>
    <property type="project" value="UniProtKB"/>
</dbReference>
<dbReference type="GO" id="GO:0035092">
    <property type="term" value="P:sperm DNA condensation"/>
    <property type="evidence" value="ECO:0000250"/>
    <property type="project" value="UniProtKB"/>
</dbReference>
<dbReference type="GO" id="GO:0007283">
    <property type="term" value="P:spermatogenesis"/>
    <property type="evidence" value="ECO:0000250"/>
    <property type="project" value="UniProtKB"/>
</dbReference>
<dbReference type="InterPro" id="IPR027889">
    <property type="entry name" value="CCER1"/>
</dbReference>
<dbReference type="InterPro" id="IPR052696">
    <property type="entry name" value="Coiled-coil_domain"/>
</dbReference>
<dbReference type="PANTHER" id="PTHR37337">
    <property type="entry name" value="COILED-COIL DOMAIN-CONTAINING GLUTAMATE-RICH PROTEIN 1"/>
    <property type="match status" value="1"/>
</dbReference>
<dbReference type="PANTHER" id="PTHR37337:SF1">
    <property type="entry name" value="COILED-COIL DOMAIN-CONTAINING GLUTAMATE-RICH PROTEIN 1"/>
    <property type="match status" value="1"/>
</dbReference>
<dbReference type="Pfam" id="PF15482">
    <property type="entry name" value="CCER1"/>
    <property type="match status" value="1"/>
</dbReference>
<gene>
    <name type="primary">CCER1</name>
    <name type="synonym">C12orf12</name>
</gene>
<comment type="function">
    <text evidence="1">Regulator of histone epigenetic modifications and chromatin compaction into the sperm head, required for histone-to-protamine (HTP) transition. HTP is a key event in which somatic histones are first replaced by testis-specific histone variants, then transition proteins (TNPs) are incorporated into the spermatid nucleus, and finally protamines (PRMs) replace the TNPs to promote chromatin condensation.</text>
</comment>
<comment type="interaction">
    <interactant intactId="EBI-746041">
        <id>Q8TC90</id>
    </interactant>
    <interactant intactId="EBI-3867333">
        <id>A8MQ03</id>
        <label>CYSRT1</label>
    </interactant>
    <organismsDiffer>false</organismsDiffer>
    <experiments>3</experiments>
</comment>
<comment type="interaction">
    <interactant intactId="EBI-746041">
        <id>Q8TC90</id>
    </interactant>
    <interactant intactId="EBI-948001">
        <id>Q15323</id>
        <label>KRT31</label>
    </interactant>
    <organismsDiffer>false</organismsDiffer>
    <experiments>3</experiments>
</comment>
<comment type="interaction">
    <interactant intactId="EBI-746041">
        <id>Q8TC90</id>
    </interactant>
    <interactant intactId="EBI-10171697">
        <id>Q6A162</id>
        <label>KRT40</label>
    </interactant>
    <organismsDiffer>false</organismsDiffer>
    <experiments>3</experiments>
</comment>
<comment type="interaction">
    <interactant intactId="EBI-746041">
        <id>Q8TC90</id>
    </interactant>
    <interactant intactId="EBI-10172511">
        <id>Q9BYR5</id>
        <label>KRTAP4-2</label>
    </interactant>
    <organismsDiffer>false</organismsDiffer>
    <experiments>3</experiments>
</comment>
<comment type="interaction">
    <interactant intactId="EBI-746041">
        <id>Q8TC90</id>
    </interactant>
    <interactant intactId="EBI-11962084">
        <id>Q3LI66</id>
        <label>KRTAP6-2</label>
    </interactant>
    <organismsDiffer>false</organismsDiffer>
    <experiments>3</experiments>
</comment>
<comment type="interaction">
    <interactant intactId="EBI-746041">
        <id>Q8TC90</id>
    </interactant>
    <interactant intactId="EBI-22311199">
        <id>Q3LI67</id>
        <label>KRTAP6-3</label>
    </interactant>
    <organismsDiffer>false</organismsDiffer>
    <experiments>3</experiments>
</comment>
<comment type="interaction">
    <interactant intactId="EBI-746041">
        <id>Q8TC90</id>
    </interactant>
    <interactant intactId="EBI-1043191">
        <id>Q9BYQ3</id>
        <label>KRTAP9-3</label>
    </interactant>
    <organismsDiffer>false</organismsDiffer>
    <experiments>3</experiments>
</comment>
<comment type="interaction">
    <interactant intactId="EBI-746041">
        <id>Q8TC90</id>
    </interactant>
    <interactant intactId="EBI-945833">
        <id>Q7Z3S9</id>
        <label>NOTCH2NLA</label>
    </interactant>
    <organismsDiffer>false</organismsDiffer>
    <experiments>4</experiments>
</comment>
<comment type="interaction">
    <interactant intactId="EBI-746041">
        <id>Q8TC90</id>
    </interactant>
    <interactant intactId="EBI-22310682">
        <id>P0DPK4</id>
        <label>NOTCH2NLC</label>
    </interactant>
    <organismsDiffer>false</organismsDiffer>
    <experiments>3</experiments>
</comment>
<comment type="interaction">
    <interactant intactId="EBI-746041">
        <id>Q8TC90</id>
    </interactant>
    <interactant intactId="EBI-5235340">
        <id>Q7Z699</id>
        <label>SPRED1</label>
    </interactant>
    <organismsDiffer>false</organismsDiffer>
    <experiments>3</experiments>
</comment>
<comment type="subcellular location">
    <subcellularLocation>
        <location evidence="5">Nucleus</location>
    </subcellularLocation>
    <text evidence="5">Forms condensates in the nucleus through liquid-liquid phase separation.</text>
</comment>
<accession>Q8TC90</accession>
<accession>Q8TC47</accession>
<organism>
    <name type="scientific">Homo sapiens</name>
    <name type="common">Human</name>
    <dbReference type="NCBI Taxonomy" id="9606"/>
    <lineage>
        <taxon>Eukaryota</taxon>
        <taxon>Metazoa</taxon>
        <taxon>Chordata</taxon>
        <taxon>Craniata</taxon>
        <taxon>Vertebrata</taxon>
        <taxon>Euteleostomi</taxon>
        <taxon>Mammalia</taxon>
        <taxon>Eutheria</taxon>
        <taxon>Euarchontoglires</taxon>
        <taxon>Primates</taxon>
        <taxon>Haplorrhini</taxon>
        <taxon>Catarrhini</taxon>
        <taxon>Hominidae</taxon>
        <taxon>Homo</taxon>
    </lineage>
</organism>
<feature type="chain" id="PRO_0000288857" description="Coiled-coil domain-containing glutamate-rich protein 1">
    <location>
        <begin position="1"/>
        <end position="406"/>
    </location>
</feature>
<feature type="region of interest" description="Disordered" evidence="3">
    <location>
        <begin position="43"/>
        <end position="72"/>
    </location>
</feature>
<feature type="region of interest" description="Disordered" evidence="3">
    <location>
        <begin position="138"/>
        <end position="167"/>
    </location>
</feature>
<feature type="region of interest" description="Disordered" evidence="3">
    <location>
        <begin position="203"/>
        <end position="244"/>
    </location>
</feature>
<feature type="region of interest" description="Disordered" evidence="3">
    <location>
        <begin position="278"/>
        <end position="358"/>
    </location>
</feature>
<feature type="coiled-coil region" evidence="2">
    <location>
        <begin position="199"/>
        <end position="225"/>
    </location>
</feature>
<feature type="coiled-coil region" evidence="2">
    <location>
        <begin position="274"/>
        <end position="359"/>
    </location>
</feature>
<feature type="compositionally biased region" description="Basic residues" evidence="3">
    <location>
        <begin position="138"/>
        <end position="158"/>
    </location>
</feature>
<feature type="compositionally biased region" description="Basic and acidic residues" evidence="3">
    <location>
        <begin position="203"/>
        <end position="212"/>
    </location>
</feature>
<feature type="compositionally biased region" description="Acidic residues" evidence="3">
    <location>
        <begin position="278"/>
        <end position="294"/>
    </location>
</feature>
<feature type="compositionally biased region" description="Acidic residues" evidence="3">
    <location>
        <begin position="301"/>
        <end position="349"/>
    </location>
</feature>
<feature type="sequence variant" id="VAR_090209" description="Found in a patient with non-obstructive azoospermia; uncertain significance." evidence="5">
    <location>
        <begin position="53"/>
        <end position="406"/>
    </location>
</feature>
<feature type="sequence variant" id="VAR_090210" description="Found in a patient with non-obstructive azoospermia; uncertain significance." evidence="5">
    <location>
        <begin position="178"/>
        <end position="406"/>
    </location>
</feature>
<feature type="sequence variant" id="VAR_059617" description="In dbSNP:rs11105882.">
    <original>D</original>
    <variation>E</variation>
    <location>
        <position position="286"/>
    </location>
</feature>
<feature type="sequence variant" id="VAR_032512" description="In dbSNP:rs17855513." evidence="4">
    <original>I</original>
    <variation>M</variation>
    <location>
        <position position="379"/>
    </location>
</feature>
<name>CCER1_HUMAN</name>